<name>HEMA_I80AB</name>
<keyword id="KW-1167">Clathrin- and caveolin-independent endocytosis of virus by host</keyword>
<keyword id="KW-1165">Clathrin-mediated endocytosis of virus by host</keyword>
<keyword id="KW-1015">Disulfide bond</keyword>
<keyword id="KW-1170">Fusion of virus membrane with host endosomal membrane</keyword>
<keyword id="KW-1168">Fusion of virus membrane with host membrane</keyword>
<keyword id="KW-0325">Glycoprotein</keyword>
<keyword id="KW-0348">Hemagglutinin</keyword>
<keyword id="KW-1032">Host cell membrane</keyword>
<keyword id="KW-1043">Host membrane</keyword>
<keyword id="KW-0945">Host-virus interaction</keyword>
<keyword id="KW-0449">Lipoprotein</keyword>
<keyword id="KW-0472">Membrane</keyword>
<keyword id="KW-0564">Palmitate</keyword>
<keyword id="KW-0732">Signal</keyword>
<keyword id="KW-0812">Transmembrane</keyword>
<keyword id="KW-1133">Transmembrane helix</keyword>
<keyword id="KW-1161">Viral attachment to host cell</keyword>
<keyword id="KW-0261">Viral envelope protein</keyword>
<keyword id="KW-1162">Viral penetration into host cytoplasm</keyword>
<keyword id="KW-0946">Virion</keyword>
<keyword id="KW-1164">Virus endocytosis by host</keyword>
<keyword id="KW-1160">Virus entry into host cell</keyword>
<dbReference type="EMBL" id="M24724">
    <property type="protein sequence ID" value="AAA43109.1"/>
    <property type="status" value="ALT_SEQ"/>
    <property type="molecule type" value="Genomic_RNA"/>
</dbReference>
<dbReference type="SMR" id="P16998"/>
<dbReference type="GlyCosmos" id="P16998">
    <property type="glycosylation" value="7 sites, No reported glycans"/>
</dbReference>
<dbReference type="GO" id="GO:0020002">
    <property type="term" value="C:host cell plasma membrane"/>
    <property type="evidence" value="ECO:0007669"/>
    <property type="project" value="UniProtKB-SubCell"/>
</dbReference>
<dbReference type="GO" id="GO:0016020">
    <property type="term" value="C:membrane"/>
    <property type="evidence" value="ECO:0007669"/>
    <property type="project" value="UniProtKB-UniRule"/>
</dbReference>
<dbReference type="GO" id="GO:0019031">
    <property type="term" value="C:viral envelope"/>
    <property type="evidence" value="ECO:0007669"/>
    <property type="project" value="UniProtKB-UniRule"/>
</dbReference>
<dbReference type="GO" id="GO:0055036">
    <property type="term" value="C:virion membrane"/>
    <property type="evidence" value="ECO:0007669"/>
    <property type="project" value="UniProtKB-SubCell"/>
</dbReference>
<dbReference type="GO" id="GO:0046789">
    <property type="term" value="F:host cell surface receptor binding"/>
    <property type="evidence" value="ECO:0007669"/>
    <property type="project" value="UniProtKB-UniRule"/>
</dbReference>
<dbReference type="GO" id="GO:0075512">
    <property type="term" value="P:clathrin-dependent endocytosis of virus by host cell"/>
    <property type="evidence" value="ECO:0007669"/>
    <property type="project" value="UniProtKB-UniRule"/>
</dbReference>
<dbReference type="GO" id="GO:0039654">
    <property type="term" value="P:fusion of virus membrane with host endosome membrane"/>
    <property type="evidence" value="ECO:0007669"/>
    <property type="project" value="UniProtKB-UniRule"/>
</dbReference>
<dbReference type="GO" id="GO:0019064">
    <property type="term" value="P:fusion of virus membrane with host plasma membrane"/>
    <property type="evidence" value="ECO:0007669"/>
    <property type="project" value="InterPro"/>
</dbReference>
<dbReference type="GO" id="GO:0046761">
    <property type="term" value="P:viral budding from plasma membrane"/>
    <property type="evidence" value="ECO:0007669"/>
    <property type="project" value="UniProtKB-UniRule"/>
</dbReference>
<dbReference type="GO" id="GO:0019062">
    <property type="term" value="P:virion attachment to host cell"/>
    <property type="evidence" value="ECO:0007669"/>
    <property type="project" value="UniProtKB-KW"/>
</dbReference>
<dbReference type="FunFam" id="3.90.20.10:FF:000001">
    <property type="entry name" value="Hemagglutinin"/>
    <property type="match status" value="1"/>
</dbReference>
<dbReference type="FunFam" id="3.90.209.20:FF:000001">
    <property type="entry name" value="Hemagglutinin"/>
    <property type="match status" value="1"/>
</dbReference>
<dbReference type="Gene3D" id="3.90.20.10">
    <property type="match status" value="1"/>
</dbReference>
<dbReference type="Gene3D" id="3.90.209.20">
    <property type="match status" value="1"/>
</dbReference>
<dbReference type="HAMAP" id="MF_04072">
    <property type="entry name" value="INFV_HEMA"/>
    <property type="match status" value="1"/>
</dbReference>
<dbReference type="InterPro" id="IPR008980">
    <property type="entry name" value="Capsid_hemagglutn"/>
</dbReference>
<dbReference type="InterPro" id="IPR013828">
    <property type="entry name" value="Hemagglutn_HA1_a/b_dom_sf"/>
</dbReference>
<dbReference type="InterPro" id="IPR000149">
    <property type="entry name" value="Hemagglutn_influenz_A"/>
</dbReference>
<dbReference type="InterPro" id="IPR001364">
    <property type="entry name" value="Hemagglutn_influenz_A/B"/>
</dbReference>
<dbReference type="Pfam" id="PF00509">
    <property type="entry name" value="Hemagglutinin"/>
    <property type="match status" value="1"/>
</dbReference>
<dbReference type="PRINTS" id="PR00330">
    <property type="entry name" value="HEMAGGLUTN1"/>
</dbReference>
<dbReference type="PRINTS" id="PR00329">
    <property type="entry name" value="HEMAGGLUTN12"/>
</dbReference>
<dbReference type="SUPFAM" id="SSF58064">
    <property type="entry name" value="Influenza hemagglutinin (stalk)"/>
    <property type="match status" value="1"/>
</dbReference>
<dbReference type="SUPFAM" id="SSF49818">
    <property type="entry name" value="Viral protein domain"/>
    <property type="match status" value="1"/>
</dbReference>
<reference key="1">
    <citation type="journal article" date="1989" name="Virology">
        <title>Evolution of the hemagglutinin of equine H3 influenza viruses.</title>
        <authorList>
            <person name="Kawaoka Y."/>
            <person name="Bean W.J."/>
            <person name="Webster R.G."/>
        </authorList>
    </citation>
    <scope>NUCLEOTIDE SEQUENCE [GENOMIC RNA]</scope>
</reference>
<organism>
    <name type="scientific">Influenza A virus (strain A/Equine/Romania/1980 H3N8)</name>
    <dbReference type="NCBI Taxonomy" id="387229"/>
    <lineage>
        <taxon>Viruses</taxon>
        <taxon>Riboviria</taxon>
        <taxon>Orthornavirae</taxon>
        <taxon>Negarnaviricota</taxon>
        <taxon>Polyploviricotina</taxon>
        <taxon>Insthoviricetes</taxon>
        <taxon>Articulavirales</taxon>
        <taxon>Orthomyxoviridae</taxon>
        <taxon>Alphainfluenzavirus</taxon>
        <taxon>Alphainfluenzavirus influenzae</taxon>
        <taxon>Influenza A virus</taxon>
    </lineage>
</organism>
<accession>P16998</accession>
<accession>Q83998</accession>
<accession>Q83999</accession>
<gene>
    <name evidence="1" type="primary">HA</name>
</gene>
<organismHost>
    <name type="scientific">Aves</name>
    <dbReference type="NCBI Taxonomy" id="8782"/>
</organismHost>
<organismHost>
    <name type="scientific">Equus caballus</name>
    <name type="common">Horse</name>
    <dbReference type="NCBI Taxonomy" id="9796"/>
</organismHost>
<feature type="signal peptide" evidence="1">
    <location>
        <begin position="1"/>
        <end position="16"/>
    </location>
</feature>
<feature type="chain" id="PRO_0000440491" description="Hemagglutinin" evidence="1">
    <location>
        <begin position="17"/>
        <end position="565"/>
    </location>
</feature>
<feature type="chain" id="PRO_0000038994" description="Hemagglutinin HA1 chain">
    <location>
        <begin position="17"/>
        <end position="343"/>
    </location>
</feature>
<feature type="chain" id="PRO_0000038995" description="Hemagglutinin HA2 chain" evidence="1">
    <location>
        <begin position="345"/>
        <end position="565"/>
    </location>
</feature>
<feature type="topological domain" description="Extracellular" evidence="1">
    <location>
        <begin position="17"/>
        <end position="529"/>
    </location>
</feature>
<feature type="transmembrane region" description="Helical" evidence="1">
    <location>
        <begin position="530"/>
        <end position="550"/>
    </location>
</feature>
<feature type="topological domain" description="Cytoplasmic" evidence="1">
    <location>
        <begin position="551"/>
        <end position="565"/>
    </location>
</feature>
<feature type="site" description="Cleavage; by host" evidence="1">
    <location>
        <begin position="344"/>
        <end position="345"/>
    </location>
</feature>
<feature type="lipid moiety-binding region" description="S-palmitoyl cysteine; by host" evidence="1">
    <location>
        <position position="554"/>
    </location>
</feature>
<feature type="lipid moiety-binding region" description="S-palmitoyl cysteine; by host" evidence="1">
    <location>
        <position position="561"/>
    </location>
</feature>
<feature type="lipid moiety-binding region" description="S-palmitoyl cysteine; by host" evidence="1">
    <location>
        <position position="564"/>
    </location>
</feature>
<feature type="glycosylation site" description="N-linked (GlcNAc...) asparagine; by host" evidence="1">
    <location>
        <position position="23"/>
    </location>
</feature>
<feature type="glycosylation site" description="N-linked (GlcNAc...) asparagine; by host" evidence="1">
    <location>
        <position position="37"/>
    </location>
</feature>
<feature type="glycosylation site" description="N-linked (GlcNAc...) asparagine; by host" evidence="1">
    <location>
        <position position="53"/>
    </location>
</feature>
<feature type="glycosylation site" description="N-linked (GlcNAc...) asparagine; by host" evidence="1">
    <location>
        <position position="78"/>
    </location>
</feature>
<feature type="glycosylation site" description="N-linked (GlcNAc...) asparagine; by host" evidence="1">
    <location>
        <position position="180"/>
    </location>
</feature>
<feature type="glycosylation site" description="N-linked (GlcNAc...) asparagine; by host" evidence="1">
    <location>
        <position position="300"/>
    </location>
</feature>
<feature type="glycosylation site" description="N-linked (GlcNAc...) asparagine; by host" evidence="1">
    <location>
        <position position="498"/>
    </location>
</feature>
<feature type="disulfide bond" description="Interchain (between HA1 and HA2 chains)" evidence="1">
    <location>
        <begin position="29"/>
        <end position="481"/>
    </location>
</feature>
<feature type="disulfide bond" evidence="1">
    <location>
        <begin position="67"/>
        <end position="292"/>
    </location>
</feature>
<feature type="disulfide bond" evidence="1">
    <location>
        <begin position="79"/>
        <end position="91"/>
    </location>
</feature>
<feature type="disulfide bond" evidence="1">
    <location>
        <begin position="112"/>
        <end position="154"/>
    </location>
</feature>
<feature type="disulfide bond" evidence="1">
    <location>
        <begin position="296"/>
        <end position="320"/>
    </location>
</feature>
<feature type="disulfide bond" evidence="1">
    <location>
        <begin position="488"/>
        <end position="492"/>
    </location>
</feature>
<proteinExistence type="inferred from homology"/>
<sequence length="565" mass="63660">MKTTIILILLTHWVYSQNPTSGNNTATLCLGHHAVANGTLVKTITDDQIEVTNATELVQSTSIGKICNNPYRVLDGRNCTLIDAMLGDPHCDVFQYENWDLFIERSSAFSNCYPYDIPDYASLRSIVASSGTLEFTAEGFTWTGVTQNGGSGACRRGSADSFFSRLNWLTKSGNSYPTLNVTMPNNNNFDKLYIWGIHHPSTNNEQTKLYVQELGRVTVSTKRSQQTIIPNIGSRPWVRGQSGRISIYWTIVKPGDILMINSNGNLVAPRGYFKMRTGKSSIMRSDAPIDTCVSECITPNGSIPNDKPFQNVNKVTYGECPKYIKQNTLKLATGMRNVPEKQIRGIFGAIAGFIENGWEGMVDGWYGFRYQNSEGTGQAADLKSTQAAIDQINGKLNRVIERTNEKFHQIEKEFSEVEGRIQDLEKYVEDTKIDLWSYNAELLVALENQHTIDLTDAEMNKLFEKTRRQLRENAEDMGGGCFKIYHKCDNACIGSIRNGTYDHYIYRDEALNNRFQIKGVELKSGYKDWILWISFAISCFLICVVLLGFIMWACQKGNIRCNICI</sequence>
<evidence type="ECO:0000255" key="1">
    <source>
        <dbReference type="HAMAP-Rule" id="MF_04072"/>
    </source>
</evidence>
<evidence type="ECO:0000305" key="2"/>
<protein>
    <recommendedName>
        <fullName evidence="1">Hemagglutinin</fullName>
    </recommendedName>
    <component>
        <recommendedName>
            <fullName evidence="1">Hemagglutinin HA1 chain</fullName>
        </recommendedName>
    </component>
    <component>
        <recommendedName>
            <fullName evidence="1">Hemagglutinin HA2 chain</fullName>
        </recommendedName>
    </component>
</protein>
<comment type="function">
    <text>Binds to sialic acid-containing receptors on the cell surface, bringing about the attachment of the virus particle to the cell. This attachment induces virion internalization of about two third of the virus particles through clathrin-dependent endocytosis and about one third through a clathrin- and caveolin-independent pathway. Plays a major role in the determination of host range restriction and virulence. Class I viral fusion protein. Responsible for penetration of the virus into the cell cytoplasm by mediating the fusion of the membrane of the endocytosed virus particle with the endosomal membrane. Low pH in endosomes induces an irreversible conformational change in HA2, releasing the fusion hydrophobic peptide. Several trimers are required to form a competent fusion pore.</text>
</comment>
<comment type="function">
    <text evidence="1">Binds to sialic acid-containing receptors on the cell surface, bringing about the attachment of the virus particle to the cell. This attachment induces virion internalization either through clathrin-dependent endocytosis or through clathrin- and caveolin-independent pathway. Plays a major role in the determination of host range restriction and virulence. Class I viral fusion protein. Responsible for penetration of the virus into the cell cytoplasm by mediating the fusion of the membrane of the endocytosed virus particle with the endosomal membrane. Low pH in endosomes induces an irreversible conformational change in HA2, releasing the fusion hydrophobic peptide. Several trimers are required to form a competent fusion pore.</text>
</comment>
<comment type="subunit">
    <text evidence="1">Homotrimer of disulfide-linked HA1-HA2.</text>
</comment>
<comment type="subcellular location">
    <subcellularLocation>
        <location evidence="1">Virion membrane</location>
        <topology evidence="1">Single-pass type I membrane protein</topology>
    </subcellularLocation>
    <subcellularLocation>
        <location evidence="1">Host apical cell membrane</location>
        <topology evidence="1">Single-pass type I membrane protein</topology>
    </subcellularLocation>
    <text evidence="1">Targeted to the apical plasma membrane in epithelial polarized cells through a signal present in the transmembrane domain. Associated with glycosphingolipid- and cholesterol-enriched detergent-resistant lipid rafts.</text>
</comment>
<comment type="PTM">
    <text evidence="1">Palmitoylated.</text>
</comment>
<comment type="PTM">
    <text evidence="1">In natural infection, inactive HA is matured into HA1 and HA2 outside the cell by one or more trypsin-like, arginine-specific endoprotease secreted by the bronchial epithelial cells. One identified protease that may be involved in this process is secreted in lungs by club cells.</text>
</comment>
<comment type="miscellaneous">
    <text>Major glycoprotein, comprises over 80% of the envelope proteins present in virus particle.</text>
</comment>
<comment type="miscellaneous">
    <text>The extent of infection into host organism is determined by HA. Influenza viruses bud from the apical surface of polarized epithelial cells (e.g. bronchial epithelial cells) into lumen of lungs and are therefore usually pneumotropic. The reason is that HA is cleaved by tryptase clara which is restricted to lungs. However, HAs of H5 and H7 pantropic avian viruses subtypes can be cleaved by furin and subtilisin-type enzymes, allowing the virus to grow in other organs than lungs.</text>
</comment>
<comment type="miscellaneous">
    <text evidence="2">The influenza A genome consist of 8 RNA segments. Genetic variation of hemagglutinin and/or neuraminidase genes results in the emergence of new influenza strains. The mechanism of variation can be the result of point mutations or the result of genetic reassortment between segments of two different strains.</text>
</comment>
<comment type="similarity">
    <text evidence="1">Belongs to the influenza viruses hemagglutinin family.</text>
</comment>